<sequence length="933" mass="105280">MAKISLKLDELIDGEALRREMTALTTATAGDGSGAAARAGVLQLLKARLAEGRKIAEAMLKEDGGGNACAERLSHLMDELIRALYDFAATHVYRVKNRSSAERMAVVAVGGYGRGTLAPGSDIDLLFLLPYKQTPWGEQTVEYMLYMLWDLGLKVGHATRNIDECLRLSRTDITIRTSILEARFLWGERKLYDELMLRFDHEVVRTTGPEYVQAKLAERDERHAKAGESRYLVEPNVKDGKGGLRDLQTLFWIGKYFYRVRTGEELVEKGVFTEAEYREFQKAEDFLWAVRCHMHFLTGKAEERLHFDIQREIAERLGYTTHPGLSAVERFMKHYFLVAKDVGDLTRIFCAALEEEQAKHVPGFNRIFLTFQRRKRKLAGTSDFIVDNHRINIADDQVFERDPVNLLRLFWFADKHGLEFHPDALKLLTRSLGLVNKSLRRDEEANRLFLDILTSDRNAELNLRRMNEAGLLGRLIPDFGKIVAMMQFSMYHHYTVDEHLIRCIGVLAEIERGDGEKVHPLSHSLMPGLKKSREALYVAVLLHDIAKGRPEDHSEAGARIARRICPHMGLSAADTETVAWLVENHLAMSMTAQTRDLNDRKTIEDFASIVQSVERLKLLLVLTVCDIRGVGPGVWNGWKGQLLRTLYYETELLLTGGFSEVSRAQRTAAARERLAEALADWPDKDRKRYVGLHYENYLLTVDLPDQLRHAEFVREADAAGKKLATMVKTHQFEAVTEITVLAQDHPRLLSVIAGACVGAGGNIVDAQIFTTADGRALDTILISREFDRDEDERRRAERVGRLIEDVLSGKSWLPEMIEKRTKPKRGAKVFKIPPRAEIRNTLSNRFSVIEVEGLDRPGLLSEITGTLSDLSLDIASAHITTFGEKVIDTFYVTDLTGQKIDSPARIATIRNRLMATLEGIAPERGGKAKAAAE</sequence>
<name>GLND_RHILO</name>
<protein>
    <recommendedName>
        <fullName evidence="1">Bifunctional uridylyltransferase/uridylyl-removing enzyme</fullName>
        <shortName evidence="1">UTase/UR</shortName>
    </recommendedName>
    <alternativeName>
        <fullName evidence="1">Bifunctional [protein-PII] modification enzyme</fullName>
    </alternativeName>
    <alternativeName>
        <fullName evidence="1">Bifunctional nitrogen sensor protein</fullName>
    </alternativeName>
    <domain>
        <recommendedName>
            <fullName evidence="1">[Protein-PII] uridylyltransferase</fullName>
            <shortName evidence="1">PII uridylyltransferase</shortName>
            <shortName evidence="1">UTase</shortName>
            <ecNumber evidence="1">2.7.7.59</ecNumber>
        </recommendedName>
    </domain>
    <domain>
        <recommendedName>
            <fullName evidence="1">[Protein-PII]-UMP uridylyl-removing enzyme</fullName>
            <shortName evidence="1">UR</shortName>
            <ecNumber evidence="1">3.1.4.-</ecNumber>
        </recommendedName>
    </domain>
</protein>
<dbReference type="EC" id="2.7.7.59" evidence="1"/>
<dbReference type="EC" id="3.1.4.-" evidence="1"/>
<dbReference type="EMBL" id="BA000012">
    <property type="protein sequence ID" value="BAB51794.1"/>
    <property type="molecule type" value="Genomic_DNA"/>
</dbReference>
<dbReference type="RefSeq" id="WP_010913133.1">
    <property type="nucleotide sequence ID" value="NC_002678.2"/>
</dbReference>
<dbReference type="SMR" id="Q98C27"/>
<dbReference type="KEGG" id="mlo:mll5321"/>
<dbReference type="PATRIC" id="fig|266835.9.peg.4220"/>
<dbReference type="eggNOG" id="COG2844">
    <property type="taxonomic scope" value="Bacteria"/>
</dbReference>
<dbReference type="HOGENOM" id="CLU_012833_1_0_5"/>
<dbReference type="Proteomes" id="UP000000552">
    <property type="component" value="Chromosome"/>
</dbReference>
<dbReference type="GO" id="GO:0008773">
    <property type="term" value="F:[protein-PII] uridylyltransferase activity"/>
    <property type="evidence" value="ECO:0007669"/>
    <property type="project" value="UniProtKB-UniRule"/>
</dbReference>
<dbReference type="GO" id="GO:0008081">
    <property type="term" value="F:phosphoric diester hydrolase activity"/>
    <property type="evidence" value="ECO:0007669"/>
    <property type="project" value="UniProtKB-UniRule"/>
</dbReference>
<dbReference type="GO" id="GO:0009399">
    <property type="term" value="P:nitrogen fixation"/>
    <property type="evidence" value="ECO:0007669"/>
    <property type="project" value="UniProtKB-UniRule"/>
</dbReference>
<dbReference type="GO" id="GO:0006808">
    <property type="term" value="P:regulation of nitrogen utilization"/>
    <property type="evidence" value="ECO:0007669"/>
    <property type="project" value="UniProtKB-UniRule"/>
</dbReference>
<dbReference type="CDD" id="cd04899">
    <property type="entry name" value="ACT_ACR-UUR-like_2"/>
    <property type="match status" value="1"/>
</dbReference>
<dbReference type="CDD" id="cd04900">
    <property type="entry name" value="ACT_UUR-like_1"/>
    <property type="match status" value="1"/>
</dbReference>
<dbReference type="CDD" id="cd00077">
    <property type="entry name" value="HDc"/>
    <property type="match status" value="1"/>
</dbReference>
<dbReference type="CDD" id="cd05401">
    <property type="entry name" value="NT_GlnE_GlnD_like"/>
    <property type="match status" value="1"/>
</dbReference>
<dbReference type="Gene3D" id="3.30.70.260">
    <property type="match status" value="1"/>
</dbReference>
<dbReference type="Gene3D" id="3.30.460.10">
    <property type="entry name" value="Beta Polymerase, domain 2"/>
    <property type="match status" value="1"/>
</dbReference>
<dbReference type="Gene3D" id="1.10.3090.10">
    <property type="entry name" value="cca-adding enzyme, domain 2"/>
    <property type="match status" value="1"/>
</dbReference>
<dbReference type="HAMAP" id="MF_00277">
    <property type="entry name" value="PII_uridylyl_transf"/>
    <property type="match status" value="1"/>
</dbReference>
<dbReference type="InterPro" id="IPR045865">
    <property type="entry name" value="ACT-like_dom_sf"/>
</dbReference>
<dbReference type="InterPro" id="IPR002912">
    <property type="entry name" value="ACT_dom"/>
</dbReference>
<dbReference type="InterPro" id="IPR003607">
    <property type="entry name" value="HD/PDEase_dom"/>
</dbReference>
<dbReference type="InterPro" id="IPR006674">
    <property type="entry name" value="HD_domain"/>
</dbReference>
<dbReference type="InterPro" id="IPR043519">
    <property type="entry name" value="NT_sf"/>
</dbReference>
<dbReference type="InterPro" id="IPR013546">
    <property type="entry name" value="PII_UdlTrfase/GS_AdlTrfase"/>
</dbReference>
<dbReference type="InterPro" id="IPR002934">
    <property type="entry name" value="Polymerase_NTP_transf_dom"/>
</dbReference>
<dbReference type="InterPro" id="IPR010043">
    <property type="entry name" value="UTase/UR"/>
</dbReference>
<dbReference type="NCBIfam" id="NF003467">
    <property type="entry name" value="PRK05092.1"/>
    <property type="match status" value="1"/>
</dbReference>
<dbReference type="NCBIfam" id="TIGR01693">
    <property type="entry name" value="UTase_glnD"/>
    <property type="match status" value="1"/>
</dbReference>
<dbReference type="PANTHER" id="PTHR47320">
    <property type="entry name" value="BIFUNCTIONAL URIDYLYLTRANSFERASE/URIDYLYL-REMOVING ENZYME"/>
    <property type="match status" value="1"/>
</dbReference>
<dbReference type="PANTHER" id="PTHR47320:SF1">
    <property type="entry name" value="BIFUNCTIONAL URIDYLYLTRANSFERASE_URIDYLYL-REMOVING ENZYME"/>
    <property type="match status" value="1"/>
</dbReference>
<dbReference type="Pfam" id="PF01842">
    <property type="entry name" value="ACT"/>
    <property type="match status" value="1"/>
</dbReference>
<dbReference type="Pfam" id="PF08335">
    <property type="entry name" value="GlnD_UR_UTase"/>
    <property type="match status" value="1"/>
</dbReference>
<dbReference type="Pfam" id="PF01966">
    <property type="entry name" value="HD"/>
    <property type="match status" value="1"/>
</dbReference>
<dbReference type="Pfam" id="PF01909">
    <property type="entry name" value="NTP_transf_2"/>
    <property type="match status" value="1"/>
</dbReference>
<dbReference type="PIRSF" id="PIRSF006288">
    <property type="entry name" value="PII_uridyltransf"/>
    <property type="match status" value="1"/>
</dbReference>
<dbReference type="SMART" id="SM00471">
    <property type="entry name" value="HDc"/>
    <property type="match status" value="1"/>
</dbReference>
<dbReference type="SUPFAM" id="SSF55021">
    <property type="entry name" value="ACT-like"/>
    <property type="match status" value="2"/>
</dbReference>
<dbReference type="SUPFAM" id="SSF81301">
    <property type="entry name" value="Nucleotidyltransferase"/>
    <property type="match status" value="1"/>
</dbReference>
<dbReference type="SUPFAM" id="SSF81593">
    <property type="entry name" value="Nucleotidyltransferase substrate binding subunit/domain"/>
    <property type="match status" value="1"/>
</dbReference>
<dbReference type="SUPFAM" id="SSF81891">
    <property type="entry name" value="Poly A polymerase C-terminal region-like"/>
    <property type="match status" value="1"/>
</dbReference>
<dbReference type="PROSITE" id="PS51671">
    <property type="entry name" value="ACT"/>
    <property type="match status" value="2"/>
</dbReference>
<dbReference type="PROSITE" id="PS51831">
    <property type="entry name" value="HD"/>
    <property type="match status" value="1"/>
</dbReference>
<evidence type="ECO:0000255" key="1">
    <source>
        <dbReference type="HAMAP-Rule" id="MF_00277"/>
    </source>
</evidence>
<evidence type="ECO:0000255" key="2">
    <source>
        <dbReference type="PROSITE-ProRule" id="PRU01175"/>
    </source>
</evidence>
<gene>
    <name evidence="1" type="primary">glnD</name>
    <name type="ordered locus">mll5321</name>
</gene>
<keyword id="KW-0378">Hydrolase</keyword>
<keyword id="KW-0460">Magnesium</keyword>
<keyword id="KW-0511">Multifunctional enzyme</keyword>
<keyword id="KW-0535">Nitrogen fixation</keyword>
<keyword id="KW-0548">Nucleotidyltransferase</keyword>
<keyword id="KW-0677">Repeat</keyword>
<keyword id="KW-0808">Transferase</keyword>
<accession>Q98C27</accession>
<organism>
    <name type="scientific">Mesorhizobium japonicum (strain LMG 29417 / CECT 9101 / MAFF 303099)</name>
    <name type="common">Mesorhizobium loti (strain MAFF 303099)</name>
    <dbReference type="NCBI Taxonomy" id="266835"/>
    <lineage>
        <taxon>Bacteria</taxon>
        <taxon>Pseudomonadati</taxon>
        <taxon>Pseudomonadota</taxon>
        <taxon>Alphaproteobacteria</taxon>
        <taxon>Hyphomicrobiales</taxon>
        <taxon>Phyllobacteriaceae</taxon>
        <taxon>Mesorhizobium</taxon>
    </lineage>
</organism>
<reference key="1">
    <citation type="journal article" date="2000" name="DNA Res.">
        <title>Complete genome structure of the nitrogen-fixing symbiotic bacterium Mesorhizobium loti.</title>
        <authorList>
            <person name="Kaneko T."/>
            <person name="Nakamura Y."/>
            <person name="Sato S."/>
            <person name="Asamizu E."/>
            <person name="Kato T."/>
            <person name="Sasamoto S."/>
            <person name="Watanabe A."/>
            <person name="Idesawa K."/>
            <person name="Ishikawa A."/>
            <person name="Kawashima K."/>
            <person name="Kimura T."/>
            <person name="Kishida Y."/>
            <person name="Kiyokawa C."/>
            <person name="Kohara M."/>
            <person name="Matsumoto M."/>
            <person name="Matsuno A."/>
            <person name="Mochizuki Y."/>
            <person name="Nakayama S."/>
            <person name="Nakazaki N."/>
            <person name="Shimpo S."/>
            <person name="Sugimoto M."/>
            <person name="Takeuchi C."/>
            <person name="Yamada M."/>
            <person name="Tabata S."/>
        </authorList>
    </citation>
    <scope>NUCLEOTIDE SEQUENCE [LARGE SCALE GENOMIC DNA]</scope>
    <source>
        <strain>LMG 29417 / CECT 9101 / MAFF 303099</strain>
    </source>
</reference>
<proteinExistence type="inferred from homology"/>
<feature type="chain" id="PRO_0000192759" description="Bifunctional uridylyltransferase/uridylyl-removing enzyme">
    <location>
        <begin position="1"/>
        <end position="933"/>
    </location>
</feature>
<feature type="domain" description="HD" evidence="2">
    <location>
        <begin position="496"/>
        <end position="619"/>
    </location>
</feature>
<feature type="domain" description="ACT 1" evidence="1">
    <location>
        <begin position="737"/>
        <end position="818"/>
    </location>
</feature>
<feature type="domain" description="ACT 2" evidence="1">
    <location>
        <begin position="848"/>
        <end position="922"/>
    </location>
</feature>
<feature type="region of interest" description="Uridylyltransferase">
    <location>
        <begin position="1"/>
        <end position="379"/>
    </location>
</feature>
<feature type="region of interest" description="Uridylyl-removing">
    <location>
        <begin position="380"/>
        <end position="736"/>
    </location>
</feature>
<comment type="function">
    <text evidence="1">Modifies, by uridylylation and deuridylylation, the PII regulatory proteins (GlnB and homologs), in response to the nitrogen status of the cell that GlnD senses through the glutamine level. Under low glutamine levels, catalyzes the conversion of the PII proteins and UTP to PII-UMP and PPi, while under higher glutamine levels, GlnD hydrolyzes PII-UMP to PII and UMP (deuridylylation). Thus, controls uridylylation state and activity of the PII proteins, and plays an important role in the regulation of nitrogen fixation and metabolism.</text>
</comment>
<comment type="catalytic activity">
    <reaction evidence="1">
        <text>[protein-PII]-L-tyrosine + UTP = [protein-PII]-uridylyl-L-tyrosine + diphosphate</text>
        <dbReference type="Rhea" id="RHEA:13673"/>
        <dbReference type="Rhea" id="RHEA-COMP:12147"/>
        <dbReference type="Rhea" id="RHEA-COMP:12148"/>
        <dbReference type="ChEBI" id="CHEBI:33019"/>
        <dbReference type="ChEBI" id="CHEBI:46398"/>
        <dbReference type="ChEBI" id="CHEBI:46858"/>
        <dbReference type="ChEBI" id="CHEBI:90602"/>
        <dbReference type="EC" id="2.7.7.59"/>
    </reaction>
</comment>
<comment type="catalytic activity">
    <reaction evidence="1">
        <text>[protein-PII]-uridylyl-L-tyrosine + H2O = [protein-PII]-L-tyrosine + UMP + H(+)</text>
        <dbReference type="Rhea" id="RHEA:48600"/>
        <dbReference type="Rhea" id="RHEA-COMP:12147"/>
        <dbReference type="Rhea" id="RHEA-COMP:12148"/>
        <dbReference type="ChEBI" id="CHEBI:15377"/>
        <dbReference type="ChEBI" id="CHEBI:15378"/>
        <dbReference type="ChEBI" id="CHEBI:46858"/>
        <dbReference type="ChEBI" id="CHEBI:57865"/>
        <dbReference type="ChEBI" id="CHEBI:90602"/>
    </reaction>
</comment>
<comment type="cofactor">
    <cofactor evidence="1">
        <name>Mg(2+)</name>
        <dbReference type="ChEBI" id="CHEBI:18420"/>
    </cofactor>
</comment>
<comment type="activity regulation">
    <text evidence="1">Uridylyltransferase (UTase) activity is inhibited by glutamine, while glutamine activates uridylyl-removing (UR) activity.</text>
</comment>
<comment type="domain">
    <text evidence="1">Has four distinct domains: an N-terminal nucleotidyltransferase (NT) domain responsible for UTase activity, a central HD domain that encodes UR activity, and two C-terminal ACT domains that seem to have a role in glutamine sensing.</text>
</comment>
<comment type="similarity">
    <text evidence="1">Belongs to the GlnD family.</text>
</comment>